<comment type="function">
    <text evidence="1">May play a role in plant defense against pathogens.</text>
</comment>
<comment type="catalytic activity">
    <reaction evidence="7">
        <text>Hydrolysis of (1-&gt;3)-beta-D-glucosidic linkages in (1-&gt;3)-beta-D-glucans.</text>
        <dbReference type="EC" id="3.2.1.39"/>
    </reaction>
</comment>
<comment type="subcellular location">
    <subcellularLocation>
        <location evidence="3">Secreted</location>
    </subcellularLocation>
</comment>
<comment type="similarity">
    <text evidence="7">Belongs to the glycosyl hydrolase 17 family.</text>
</comment>
<protein>
    <recommendedName>
        <fullName evidence="7">Probable glucan endo-1,3-beta-glucosidase BG4</fullName>
        <ecNumber evidence="7">3.2.1.39</ecNumber>
    </recommendedName>
    <alternativeName>
        <fullName evidence="7">Beta-1,3-glucanase 4</fullName>
    </alternativeName>
</protein>
<proteinExistence type="evidence at transcript level"/>
<organism>
    <name type="scientific">Arabidopsis thaliana</name>
    <name type="common">Mouse-ear cress</name>
    <dbReference type="NCBI Taxonomy" id="3702"/>
    <lineage>
        <taxon>Eukaryota</taxon>
        <taxon>Viridiplantae</taxon>
        <taxon>Streptophyta</taxon>
        <taxon>Embryophyta</taxon>
        <taxon>Tracheophyta</taxon>
        <taxon>Spermatophyta</taxon>
        <taxon>Magnoliopsida</taxon>
        <taxon>eudicotyledons</taxon>
        <taxon>Gunneridae</taxon>
        <taxon>Pentapetalae</taxon>
        <taxon>rosids</taxon>
        <taxon>malvids</taxon>
        <taxon>Brassicales</taxon>
        <taxon>Brassicaceae</taxon>
        <taxon>Camelineae</taxon>
        <taxon>Arabidopsis</taxon>
    </lineage>
</organism>
<accession>O49352</accession>
<accession>Q84LG3</accession>
<accession>Q8LEU0</accession>
<sequence>MLYSPKKLFLFFLSCIVLYVNSNNSGFVTAANSIGLNYGLLGDNLPSPSNVINLYKSIGISRIRIFDPNTEVLNALRGHRDIEVTVGVKDQDLAALAASEEAVKGWFAANIESYLADVNITFITVGNEVIPGPIGPQVLPVMQSLTNLVKSRNLPISISTVVAMSNLEQSYPPSAGMFTSQAREQLVPVLKLLSQTSTPILVNIYPYFAYASDPANIRLDYASFNTKSIVVQDGSLGYSNMFDAIFDAFVWAMEKEGVKNLPMVVSETGWPSAGNGNFTTPAIASTYNRNFVKHIASGKGTPKRPNKSMNGFLFATFNENQKPAGTEQNFGLYNPSDMKPIYKLF</sequence>
<gene>
    <name evidence="6" type="primary">BG4</name>
    <name evidence="9" type="synonym">BETAG4</name>
    <name evidence="8" type="ordered locus">At5g20330</name>
    <name evidence="10" type="ORF">F5O24.220</name>
</gene>
<feature type="signal peptide" evidence="4">
    <location>
        <begin position="1"/>
        <end position="22"/>
    </location>
</feature>
<feature type="chain" id="PRO_0000434698" description="Probable glucan endo-1,3-beta-glucosidase BG4" evidence="4">
    <location>
        <begin position="23"/>
        <end position="345"/>
    </location>
</feature>
<feature type="active site" description="Proton donor" evidence="2">
    <location>
        <position position="128"/>
    </location>
</feature>
<feature type="active site" description="Nucleophile" evidence="2">
    <location>
        <position position="267"/>
    </location>
</feature>
<feature type="glycosylation site" description="N-linked (GlcNAc...) asparagine" evidence="5">
    <location>
        <position position="23"/>
    </location>
</feature>
<feature type="glycosylation site" description="N-linked (GlcNAc...) asparagine" evidence="5">
    <location>
        <position position="119"/>
    </location>
</feature>
<feature type="glycosylation site" description="N-linked (GlcNAc...) asparagine" evidence="5">
    <location>
        <position position="277"/>
    </location>
</feature>
<feature type="glycosylation site" description="N-linked (GlcNAc...) asparagine" evidence="5">
    <location>
        <position position="306"/>
    </location>
</feature>
<feature type="sequence conflict" description="In Ref. 4; AAM62473." evidence="7" ref="4">
    <original>S</original>
    <variation>Y</variation>
    <location>
        <position position="22"/>
    </location>
</feature>
<feature type="sequence conflict" description="In Ref. 4; AAM62473." evidence="7" ref="4">
    <original>P</original>
    <variation>S</variation>
    <location>
        <position position="46"/>
    </location>
</feature>
<feature type="sequence conflict" description="In Ref. 4; AAM62473." evidence="7" ref="4">
    <original>G</original>
    <variation>A</variation>
    <location>
        <position position="126"/>
    </location>
</feature>
<feature type="sequence conflict" description="In Ref. 4; AAM62473." evidence="7" ref="4">
    <original>N</original>
    <variation>D</variation>
    <location>
        <position position="260"/>
    </location>
</feature>
<feature type="sequence conflict" description="In Ref. 4; AAM62473." evidence="7" ref="4">
    <original>N</original>
    <variation>D</variation>
    <location>
        <position position="310"/>
    </location>
</feature>
<evidence type="ECO:0000250" key="1">
    <source>
        <dbReference type="UniProtKB" id="F4J270"/>
    </source>
</evidence>
<evidence type="ECO:0000250" key="2">
    <source>
        <dbReference type="UniProtKB" id="O22317"/>
    </source>
</evidence>
<evidence type="ECO:0000250" key="3">
    <source>
        <dbReference type="UniProtKB" id="P33157"/>
    </source>
</evidence>
<evidence type="ECO:0000255" key="4"/>
<evidence type="ECO:0000255" key="5">
    <source>
        <dbReference type="PROSITE-ProRule" id="PRU00498"/>
    </source>
</evidence>
<evidence type="ECO:0000303" key="6">
    <source>
    </source>
</evidence>
<evidence type="ECO:0000305" key="7"/>
<evidence type="ECO:0000312" key="8">
    <source>
        <dbReference type="Araport" id="AT5G20330"/>
    </source>
</evidence>
<evidence type="ECO:0000312" key="9">
    <source>
        <dbReference type="EMBL" id="AED92832.1"/>
    </source>
</evidence>
<evidence type="ECO:0000312" key="10">
    <source>
        <dbReference type="EMBL" id="AF296825"/>
    </source>
</evidence>
<dbReference type="EC" id="3.2.1.39" evidence="7"/>
<dbReference type="EMBL" id="X79694">
    <property type="protein sequence ID" value="CAA56134.1"/>
    <property type="molecule type" value="Genomic_DNA"/>
</dbReference>
<dbReference type="EMBL" id="AF296825">
    <property type="status" value="NOT_ANNOTATED_CDS"/>
    <property type="molecule type" value="Genomic_DNA"/>
</dbReference>
<dbReference type="EMBL" id="CP002688">
    <property type="protein sequence ID" value="AED92832.1"/>
    <property type="molecule type" value="Genomic_DNA"/>
</dbReference>
<dbReference type="EMBL" id="AY085241">
    <property type="protein sequence ID" value="AAM62473.1"/>
    <property type="molecule type" value="mRNA"/>
</dbReference>
<dbReference type="EMBL" id="BT003836">
    <property type="protein sequence ID" value="AAO41887.1"/>
    <property type="molecule type" value="mRNA"/>
</dbReference>
<dbReference type="RefSeq" id="NP_197533.1">
    <property type="nucleotide sequence ID" value="NM_122040.4"/>
</dbReference>
<dbReference type="SMR" id="O49352"/>
<dbReference type="FunCoup" id="O49352">
    <property type="interactions" value="23"/>
</dbReference>
<dbReference type="STRING" id="3702.O49352"/>
<dbReference type="CAZy" id="GH17">
    <property type="family name" value="Glycoside Hydrolase Family 17"/>
</dbReference>
<dbReference type="GlyCosmos" id="O49352">
    <property type="glycosylation" value="4 sites, No reported glycans"/>
</dbReference>
<dbReference type="GlyGen" id="O49352">
    <property type="glycosylation" value="4 sites"/>
</dbReference>
<dbReference type="PaxDb" id="3702-AT5G20330.1"/>
<dbReference type="ProteomicsDB" id="240329"/>
<dbReference type="EnsemblPlants" id="AT5G20330.1">
    <property type="protein sequence ID" value="AT5G20330.1"/>
    <property type="gene ID" value="AT5G20330"/>
</dbReference>
<dbReference type="GeneID" id="832155"/>
<dbReference type="Gramene" id="AT5G20330.1">
    <property type="protein sequence ID" value="AT5G20330.1"/>
    <property type="gene ID" value="AT5G20330"/>
</dbReference>
<dbReference type="KEGG" id="ath:AT5G20330"/>
<dbReference type="Araport" id="AT5G20330"/>
<dbReference type="TAIR" id="AT5G20330">
    <property type="gene designation" value="BETAG4"/>
</dbReference>
<dbReference type="eggNOG" id="ENOG502QVKW">
    <property type="taxonomic scope" value="Eukaryota"/>
</dbReference>
<dbReference type="HOGENOM" id="CLU_024953_0_0_1"/>
<dbReference type="InParanoid" id="O49352"/>
<dbReference type="OMA" id="WFAANIE"/>
<dbReference type="PhylomeDB" id="O49352"/>
<dbReference type="BioCyc" id="ARA:AT5G20330-MONOMER"/>
<dbReference type="PRO" id="PR:O49352"/>
<dbReference type="Proteomes" id="UP000006548">
    <property type="component" value="Chromosome 5"/>
</dbReference>
<dbReference type="ExpressionAtlas" id="O49352">
    <property type="expression patterns" value="baseline and differential"/>
</dbReference>
<dbReference type="GO" id="GO:0005576">
    <property type="term" value="C:extracellular region"/>
    <property type="evidence" value="ECO:0007669"/>
    <property type="project" value="UniProtKB-SubCell"/>
</dbReference>
<dbReference type="GO" id="GO:0042973">
    <property type="term" value="F:glucan endo-1,3-beta-D-glucosidase activity"/>
    <property type="evidence" value="ECO:0007669"/>
    <property type="project" value="UniProtKB-EC"/>
</dbReference>
<dbReference type="GO" id="GO:0005975">
    <property type="term" value="P:carbohydrate metabolic process"/>
    <property type="evidence" value="ECO:0007669"/>
    <property type="project" value="InterPro"/>
</dbReference>
<dbReference type="GO" id="GO:0006952">
    <property type="term" value="P:defense response"/>
    <property type="evidence" value="ECO:0007669"/>
    <property type="project" value="UniProtKB-KW"/>
</dbReference>
<dbReference type="FunFam" id="3.20.20.80:FF:000010">
    <property type="entry name" value="glucan endo-1,3-beta-glucosidase, basic"/>
    <property type="match status" value="1"/>
</dbReference>
<dbReference type="Gene3D" id="3.20.20.80">
    <property type="entry name" value="Glycosidases"/>
    <property type="match status" value="1"/>
</dbReference>
<dbReference type="InterPro" id="IPR000490">
    <property type="entry name" value="Glyco_hydro_17"/>
</dbReference>
<dbReference type="InterPro" id="IPR044965">
    <property type="entry name" value="Glyco_hydro_17_plant"/>
</dbReference>
<dbReference type="InterPro" id="IPR017853">
    <property type="entry name" value="Glycoside_hydrolase_SF"/>
</dbReference>
<dbReference type="PANTHER" id="PTHR32227">
    <property type="entry name" value="GLUCAN ENDO-1,3-BETA-GLUCOSIDASE BG1-RELATED-RELATED"/>
    <property type="match status" value="1"/>
</dbReference>
<dbReference type="Pfam" id="PF00332">
    <property type="entry name" value="Glyco_hydro_17"/>
    <property type="match status" value="1"/>
</dbReference>
<dbReference type="SUPFAM" id="SSF51445">
    <property type="entry name" value="(Trans)glycosidases"/>
    <property type="match status" value="1"/>
</dbReference>
<dbReference type="PROSITE" id="PS00587">
    <property type="entry name" value="GLYCOSYL_HYDROL_F17"/>
    <property type="match status" value="1"/>
</dbReference>
<reference key="1">
    <citation type="journal article" date="1999" name="Plant Mol. Biol.">
        <title>A novel flower-specific Arabidopsis gene related to both pathogen-induced and developmentally regulated plant beta-1,3-glucanase genes.</title>
        <authorList>
            <person name="Delp G."/>
            <person name="Palva E.T."/>
        </authorList>
    </citation>
    <scope>NUCLEOTIDE SEQUENCE [GENOMIC DNA]</scope>
    <scope>TISSUE SPECIFICITY</scope>
    <source>
        <strain>cv. Columbia</strain>
    </source>
</reference>
<reference key="2">
    <citation type="journal article" date="2000" name="Nature">
        <title>Sequence and analysis of chromosome 5 of the plant Arabidopsis thaliana.</title>
        <authorList>
            <person name="Tabata S."/>
            <person name="Kaneko T."/>
            <person name="Nakamura Y."/>
            <person name="Kotani H."/>
            <person name="Kato T."/>
            <person name="Asamizu E."/>
            <person name="Miyajima N."/>
            <person name="Sasamoto S."/>
            <person name="Kimura T."/>
            <person name="Hosouchi T."/>
            <person name="Kawashima K."/>
            <person name="Kohara M."/>
            <person name="Matsumoto M."/>
            <person name="Matsuno A."/>
            <person name="Muraki A."/>
            <person name="Nakayama S."/>
            <person name="Nakazaki N."/>
            <person name="Naruo K."/>
            <person name="Okumura S."/>
            <person name="Shinpo S."/>
            <person name="Takeuchi C."/>
            <person name="Wada T."/>
            <person name="Watanabe A."/>
            <person name="Yamada M."/>
            <person name="Yasuda M."/>
            <person name="Sato S."/>
            <person name="de la Bastide M."/>
            <person name="Huang E."/>
            <person name="Spiegel L."/>
            <person name="Gnoj L."/>
            <person name="O'Shaughnessy A."/>
            <person name="Preston R."/>
            <person name="Habermann K."/>
            <person name="Murray J."/>
            <person name="Johnson D."/>
            <person name="Rohlfing T."/>
            <person name="Nelson J."/>
            <person name="Stoneking T."/>
            <person name="Pepin K."/>
            <person name="Spieth J."/>
            <person name="Sekhon M."/>
            <person name="Armstrong J."/>
            <person name="Becker M."/>
            <person name="Belter E."/>
            <person name="Cordum H."/>
            <person name="Cordes M."/>
            <person name="Courtney L."/>
            <person name="Courtney W."/>
            <person name="Dante M."/>
            <person name="Du H."/>
            <person name="Edwards J."/>
            <person name="Fryman J."/>
            <person name="Haakensen B."/>
            <person name="Lamar E."/>
            <person name="Latreille P."/>
            <person name="Leonard S."/>
            <person name="Meyer R."/>
            <person name="Mulvaney E."/>
            <person name="Ozersky P."/>
            <person name="Riley A."/>
            <person name="Strowmatt C."/>
            <person name="Wagner-McPherson C."/>
            <person name="Wollam A."/>
            <person name="Yoakum M."/>
            <person name="Bell M."/>
            <person name="Dedhia N."/>
            <person name="Parnell L."/>
            <person name="Shah R."/>
            <person name="Rodriguez M."/>
            <person name="Hoon See L."/>
            <person name="Vil D."/>
            <person name="Baker J."/>
            <person name="Kirchoff K."/>
            <person name="Toth K."/>
            <person name="King L."/>
            <person name="Bahret A."/>
            <person name="Miller B."/>
            <person name="Marra M.A."/>
            <person name="Martienssen R."/>
            <person name="McCombie W.R."/>
            <person name="Wilson R.K."/>
            <person name="Murphy G."/>
            <person name="Bancroft I."/>
            <person name="Volckaert G."/>
            <person name="Wambutt R."/>
            <person name="Duesterhoeft A."/>
            <person name="Stiekema W."/>
            <person name="Pohl T."/>
            <person name="Entian K.-D."/>
            <person name="Terryn N."/>
            <person name="Hartley N."/>
            <person name="Bent E."/>
            <person name="Johnson S."/>
            <person name="Langham S.-A."/>
            <person name="McCullagh B."/>
            <person name="Robben J."/>
            <person name="Grymonprez B."/>
            <person name="Zimmermann W."/>
            <person name="Ramsperger U."/>
            <person name="Wedler H."/>
            <person name="Balke K."/>
            <person name="Wedler E."/>
            <person name="Peters S."/>
            <person name="van Staveren M."/>
            <person name="Dirkse W."/>
            <person name="Mooijman P."/>
            <person name="Klein Lankhorst R."/>
            <person name="Weitzenegger T."/>
            <person name="Bothe G."/>
            <person name="Rose M."/>
            <person name="Hauf J."/>
            <person name="Berneiser S."/>
            <person name="Hempel S."/>
            <person name="Feldpausch M."/>
            <person name="Lamberth S."/>
            <person name="Villarroel R."/>
            <person name="Gielen J."/>
            <person name="Ardiles W."/>
            <person name="Bents O."/>
            <person name="Lemcke K."/>
            <person name="Kolesov G."/>
            <person name="Mayer K.F.X."/>
            <person name="Rudd S."/>
            <person name="Schoof H."/>
            <person name="Schueller C."/>
            <person name="Zaccaria P."/>
            <person name="Mewes H.-W."/>
            <person name="Bevan M."/>
            <person name="Fransz P.F."/>
        </authorList>
    </citation>
    <scope>NUCLEOTIDE SEQUENCE [LARGE SCALE GENOMIC DNA]</scope>
    <source>
        <strain>cv. Columbia</strain>
    </source>
</reference>
<reference key="3">
    <citation type="journal article" date="2017" name="Plant J.">
        <title>Araport11: a complete reannotation of the Arabidopsis thaliana reference genome.</title>
        <authorList>
            <person name="Cheng C.Y."/>
            <person name="Krishnakumar V."/>
            <person name="Chan A.P."/>
            <person name="Thibaud-Nissen F."/>
            <person name="Schobel S."/>
            <person name="Town C.D."/>
        </authorList>
    </citation>
    <scope>GENOME REANNOTATION</scope>
    <source>
        <strain>cv. Columbia</strain>
    </source>
</reference>
<reference key="4">
    <citation type="submission" date="2002-03" db="EMBL/GenBank/DDBJ databases">
        <title>Full-length cDNA from Arabidopsis thaliana.</title>
        <authorList>
            <person name="Brover V.V."/>
            <person name="Troukhan M.E."/>
            <person name="Alexandrov N.A."/>
            <person name="Lu Y.-P."/>
            <person name="Flavell R.B."/>
            <person name="Feldmann K.A."/>
        </authorList>
    </citation>
    <scope>NUCLEOTIDE SEQUENCE [LARGE SCALE MRNA]</scope>
</reference>
<reference key="5">
    <citation type="journal article" date="2003" name="Science">
        <title>Empirical analysis of transcriptional activity in the Arabidopsis genome.</title>
        <authorList>
            <person name="Yamada K."/>
            <person name="Lim J."/>
            <person name="Dale J.M."/>
            <person name="Chen H."/>
            <person name="Shinn P."/>
            <person name="Palm C.J."/>
            <person name="Southwick A.M."/>
            <person name="Wu H.C."/>
            <person name="Kim C.J."/>
            <person name="Nguyen M."/>
            <person name="Pham P.K."/>
            <person name="Cheuk R.F."/>
            <person name="Karlin-Newmann G."/>
            <person name="Liu S.X."/>
            <person name="Lam B."/>
            <person name="Sakano H."/>
            <person name="Wu T."/>
            <person name="Yu G."/>
            <person name="Miranda M."/>
            <person name="Quach H.L."/>
            <person name="Tripp M."/>
            <person name="Chang C.H."/>
            <person name="Lee J.M."/>
            <person name="Toriumi M.J."/>
            <person name="Chan M.M."/>
            <person name="Tang C.C."/>
            <person name="Onodera C.S."/>
            <person name="Deng J.M."/>
            <person name="Akiyama K."/>
            <person name="Ansari Y."/>
            <person name="Arakawa T."/>
            <person name="Banh J."/>
            <person name="Banno F."/>
            <person name="Bowser L."/>
            <person name="Brooks S.Y."/>
            <person name="Carninci P."/>
            <person name="Chao Q."/>
            <person name="Choy N."/>
            <person name="Enju A."/>
            <person name="Goldsmith A.D."/>
            <person name="Gurjal M."/>
            <person name="Hansen N.F."/>
            <person name="Hayashizaki Y."/>
            <person name="Johnson-Hopson C."/>
            <person name="Hsuan V.W."/>
            <person name="Iida K."/>
            <person name="Karnes M."/>
            <person name="Khan S."/>
            <person name="Koesema E."/>
            <person name="Ishida J."/>
            <person name="Jiang P.X."/>
            <person name="Jones T."/>
            <person name="Kawai J."/>
            <person name="Kamiya A."/>
            <person name="Meyers C."/>
            <person name="Nakajima M."/>
            <person name="Narusaka M."/>
            <person name="Seki M."/>
            <person name="Sakurai T."/>
            <person name="Satou M."/>
            <person name="Tamse R."/>
            <person name="Vaysberg M."/>
            <person name="Wallender E.K."/>
            <person name="Wong C."/>
            <person name="Yamamura Y."/>
            <person name="Yuan S."/>
            <person name="Shinozaki K."/>
            <person name="Davis R.W."/>
            <person name="Theologis A."/>
            <person name="Ecker J.R."/>
        </authorList>
    </citation>
    <scope>NUCLEOTIDE SEQUENCE [LARGE SCALE MRNA] OF 257-345</scope>
    <source>
        <strain>cv. Columbia</strain>
    </source>
</reference>
<keyword id="KW-0325">Glycoprotein</keyword>
<keyword id="KW-0326">Glycosidase</keyword>
<keyword id="KW-0378">Hydrolase</keyword>
<keyword id="KW-0611">Plant defense</keyword>
<keyword id="KW-1185">Reference proteome</keyword>
<keyword id="KW-0964">Secreted</keyword>
<keyword id="KW-0732">Signal</keyword>
<name>BG4_ARATH</name>